<dbReference type="EMBL" id="CU329670">
    <property type="protein sequence ID" value="CAB11647.1"/>
    <property type="molecule type" value="Genomic_DNA"/>
</dbReference>
<dbReference type="PIR" id="T37950">
    <property type="entry name" value="T37950"/>
</dbReference>
<dbReference type="BioGRID" id="279006">
    <property type="interactions" value="69"/>
</dbReference>
<dbReference type="STRING" id="284812.O13827"/>
<dbReference type="iPTMnet" id="O13827"/>
<dbReference type="PaxDb" id="4896-SPAC19A8.11c.1"/>
<dbReference type="EnsemblFungi" id="SPAC19A8.11c.1">
    <property type="protein sequence ID" value="SPAC19A8.11c.1:pep"/>
    <property type="gene ID" value="SPAC19A8.11c"/>
</dbReference>
<dbReference type="KEGG" id="spo:2542549"/>
<dbReference type="PomBase" id="SPAC19A8.11c"/>
<dbReference type="VEuPathDB" id="FungiDB:SPAC19A8.11c"/>
<dbReference type="eggNOG" id="ENOG502RTVH">
    <property type="taxonomic scope" value="Eukaryota"/>
</dbReference>
<dbReference type="HOGENOM" id="CLU_098753_0_0_1"/>
<dbReference type="InParanoid" id="O13827"/>
<dbReference type="OMA" id="QTGKNEF"/>
<dbReference type="PhylomeDB" id="O13827"/>
<dbReference type="PRO" id="PR:O13827"/>
<dbReference type="Proteomes" id="UP000002485">
    <property type="component" value="Chromosome I"/>
</dbReference>
<dbReference type="GO" id="GO:0005829">
    <property type="term" value="C:cytosol"/>
    <property type="evidence" value="ECO:0007005"/>
    <property type="project" value="PomBase"/>
</dbReference>
<dbReference type="GO" id="GO:0005634">
    <property type="term" value="C:nucleus"/>
    <property type="evidence" value="ECO:0007005"/>
    <property type="project" value="PomBase"/>
</dbReference>
<dbReference type="GO" id="GO:0030674">
    <property type="term" value="F:protein-macromolecule adaptor activity"/>
    <property type="evidence" value="ECO:0000318"/>
    <property type="project" value="GO_Central"/>
</dbReference>
<dbReference type="GO" id="GO:0072583">
    <property type="term" value="P:clathrin-dependent endocytosis"/>
    <property type="evidence" value="ECO:0000266"/>
    <property type="project" value="PomBase"/>
</dbReference>
<dbReference type="GO" id="GO:0016192">
    <property type="term" value="P:vesicle-mediated transport"/>
    <property type="evidence" value="ECO:0000318"/>
    <property type="project" value="GO_Central"/>
</dbReference>
<dbReference type="Gene3D" id="3.40.50.11960">
    <property type="match status" value="1"/>
</dbReference>
<dbReference type="InterPro" id="IPR034627">
    <property type="entry name" value="Irc6"/>
</dbReference>
<dbReference type="PANTHER" id="PTHR28043">
    <property type="entry name" value="INCREASED RECOMBINATION CENTERS PROTEIN 6"/>
    <property type="match status" value="1"/>
</dbReference>
<dbReference type="PANTHER" id="PTHR28043:SF1">
    <property type="entry name" value="INCREASED RECOMBINATION CENTERS PROTEIN 6"/>
    <property type="match status" value="1"/>
</dbReference>
<dbReference type="Pfam" id="PF10199">
    <property type="entry name" value="Adaptin_binding"/>
    <property type="match status" value="1"/>
</dbReference>
<reference key="1">
    <citation type="journal article" date="2002" name="Nature">
        <title>The genome sequence of Schizosaccharomyces pombe.</title>
        <authorList>
            <person name="Wood V."/>
            <person name="Gwilliam R."/>
            <person name="Rajandream M.A."/>
            <person name="Lyne M.H."/>
            <person name="Lyne R."/>
            <person name="Stewart A."/>
            <person name="Sgouros J.G."/>
            <person name="Peat N."/>
            <person name="Hayles J."/>
            <person name="Baker S.G."/>
            <person name="Basham D."/>
            <person name="Bowman S."/>
            <person name="Brooks K."/>
            <person name="Brown D."/>
            <person name="Brown S."/>
            <person name="Chillingworth T."/>
            <person name="Churcher C.M."/>
            <person name="Collins M."/>
            <person name="Connor R."/>
            <person name="Cronin A."/>
            <person name="Davis P."/>
            <person name="Feltwell T."/>
            <person name="Fraser A."/>
            <person name="Gentles S."/>
            <person name="Goble A."/>
            <person name="Hamlin N."/>
            <person name="Harris D.E."/>
            <person name="Hidalgo J."/>
            <person name="Hodgson G."/>
            <person name="Holroyd S."/>
            <person name="Hornsby T."/>
            <person name="Howarth S."/>
            <person name="Huckle E.J."/>
            <person name="Hunt S."/>
            <person name="Jagels K."/>
            <person name="James K.D."/>
            <person name="Jones L."/>
            <person name="Jones M."/>
            <person name="Leather S."/>
            <person name="McDonald S."/>
            <person name="McLean J."/>
            <person name="Mooney P."/>
            <person name="Moule S."/>
            <person name="Mungall K.L."/>
            <person name="Murphy L.D."/>
            <person name="Niblett D."/>
            <person name="Odell C."/>
            <person name="Oliver K."/>
            <person name="O'Neil S."/>
            <person name="Pearson D."/>
            <person name="Quail M.A."/>
            <person name="Rabbinowitsch E."/>
            <person name="Rutherford K.M."/>
            <person name="Rutter S."/>
            <person name="Saunders D."/>
            <person name="Seeger K."/>
            <person name="Sharp S."/>
            <person name="Skelton J."/>
            <person name="Simmonds M.N."/>
            <person name="Squares R."/>
            <person name="Squares S."/>
            <person name="Stevens K."/>
            <person name="Taylor K."/>
            <person name="Taylor R.G."/>
            <person name="Tivey A."/>
            <person name="Walsh S.V."/>
            <person name="Warren T."/>
            <person name="Whitehead S."/>
            <person name="Woodward J.R."/>
            <person name="Volckaert G."/>
            <person name="Aert R."/>
            <person name="Robben J."/>
            <person name="Grymonprez B."/>
            <person name="Weltjens I."/>
            <person name="Vanstreels E."/>
            <person name="Rieger M."/>
            <person name="Schaefer M."/>
            <person name="Mueller-Auer S."/>
            <person name="Gabel C."/>
            <person name="Fuchs M."/>
            <person name="Duesterhoeft A."/>
            <person name="Fritzc C."/>
            <person name="Holzer E."/>
            <person name="Moestl D."/>
            <person name="Hilbert H."/>
            <person name="Borzym K."/>
            <person name="Langer I."/>
            <person name="Beck A."/>
            <person name="Lehrach H."/>
            <person name="Reinhardt R."/>
            <person name="Pohl T.M."/>
            <person name="Eger P."/>
            <person name="Zimmermann W."/>
            <person name="Wedler H."/>
            <person name="Wambutt R."/>
            <person name="Purnelle B."/>
            <person name="Goffeau A."/>
            <person name="Cadieu E."/>
            <person name="Dreano S."/>
            <person name="Gloux S."/>
            <person name="Lelaure V."/>
            <person name="Mottier S."/>
            <person name="Galibert F."/>
            <person name="Aves S.J."/>
            <person name="Xiang Z."/>
            <person name="Hunt C."/>
            <person name="Moore K."/>
            <person name="Hurst S.M."/>
            <person name="Lucas M."/>
            <person name="Rochet M."/>
            <person name="Gaillardin C."/>
            <person name="Tallada V.A."/>
            <person name="Garzon A."/>
            <person name="Thode G."/>
            <person name="Daga R.R."/>
            <person name="Cruzado L."/>
            <person name="Jimenez J."/>
            <person name="Sanchez M."/>
            <person name="del Rey F."/>
            <person name="Benito J."/>
            <person name="Dominguez A."/>
            <person name="Revuelta J.L."/>
            <person name="Moreno S."/>
            <person name="Armstrong J."/>
            <person name="Forsburg S.L."/>
            <person name="Cerutti L."/>
            <person name="Lowe T."/>
            <person name="McCombie W.R."/>
            <person name="Paulsen I."/>
            <person name="Potashkin J."/>
            <person name="Shpakovski G.V."/>
            <person name="Ussery D."/>
            <person name="Barrell B.G."/>
            <person name="Nurse P."/>
        </authorList>
    </citation>
    <scope>NUCLEOTIDE SEQUENCE [LARGE SCALE GENOMIC DNA]</scope>
    <source>
        <strain>972 / ATCC 24843</strain>
    </source>
</reference>
<reference key="2">
    <citation type="journal article" date="2008" name="J. Proteome Res.">
        <title>Phosphoproteome analysis of fission yeast.</title>
        <authorList>
            <person name="Wilson-Grady J.T."/>
            <person name="Villen J."/>
            <person name="Gygi S.P."/>
        </authorList>
    </citation>
    <scope>PHOSPHORYLATION [LARGE SCALE ANALYSIS] AT SER-194</scope>
    <scope>IDENTIFICATION BY MASS SPECTROMETRY</scope>
</reference>
<organism>
    <name type="scientific">Schizosaccharomyces pombe (strain 972 / ATCC 24843)</name>
    <name type="common">Fission yeast</name>
    <dbReference type="NCBI Taxonomy" id="284812"/>
    <lineage>
        <taxon>Eukaryota</taxon>
        <taxon>Fungi</taxon>
        <taxon>Dikarya</taxon>
        <taxon>Ascomycota</taxon>
        <taxon>Taphrinomycotina</taxon>
        <taxon>Schizosaccharomycetes</taxon>
        <taxon>Schizosaccharomycetales</taxon>
        <taxon>Schizosaccharomycetaceae</taxon>
        <taxon>Schizosaccharomyces</taxon>
    </lineage>
</organism>
<keyword id="KW-0597">Phosphoprotein</keyword>
<keyword id="KW-1185">Reference proteome</keyword>
<sequence>MRVILVIGRSNSGKLDFIKALTGSLPKGLDDEAFNNDHSGLIHKYNIRNKYFEASVGIWIEEYSNLAETLDAYSSEEAKEVIDSLGAIVYTFRSFDEAEWSLFKNFIDKLQLEIPVIGLHMSDEKLLEPPDVFTPEYISISEEGVNEFNEKVGLDRVREILDCCEWNLSQVDKSFSEEKDDAGDFYLPERFKGSPDMQSTDLDNLMKEMNQIRDADLEKNEKKAKALNLLEKLLGDEFEENDYESL</sequence>
<evidence type="ECO:0000269" key="1">
    <source>
    </source>
</evidence>
<accession>O13827</accession>
<name>YEEB_SCHPO</name>
<proteinExistence type="evidence at protein level"/>
<protein>
    <recommendedName>
        <fullName>Uncharacterized protein C19A8.11c</fullName>
    </recommendedName>
</protein>
<feature type="chain" id="PRO_0000116717" description="Uncharacterized protein C19A8.11c">
    <location>
        <begin position="1"/>
        <end position="246"/>
    </location>
</feature>
<feature type="modified residue" description="Phosphoserine" evidence="1">
    <location>
        <position position="194"/>
    </location>
</feature>
<gene>
    <name type="ORF">SPAC19A8.11c</name>
</gene>